<evidence type="ECO:0000250" key="1"/>
<evidence type="ECO:0000305" key="2"/>
<protein>
    <recommendedName>
        <fullName>Probable metalloprotease ARX1</fullName>
        <ecNumber>3.-.-.-</ecNumber>
    </recommendedName>
    <alternativeName>
        <fullName>Associated with ribosomal export complex protein 1</fullName>
    </alternativeName>
</protein>
<proteinExistence type="inferred from homology"/>
<organism>
    <name type="scientific">Candida glabrata (strain ATCC 2001 / BCRC 20586 / JCM 3761 / NBRC 0622 / NRRL Y-65 / CBS 138)</name>
    <name type="common">Yeast</name>
    <name type="synonym">Nakaseomyces glabratus</name>
    <dbReference type="NCBI Taxonomy" id="284593"/>
    <lineage>
        <taxon>Eukaryota</taxon>
        <taxon>Fungi</taxon>
        <taxon>Dikarya</taxon>
        <taxon>Ascomycota</taxon>
        <taxon>Saccharomycotina</taxon>
        <taxon>Saccharomycetes</taxon>
        <taxon>Saccharomycetales</taxon>
        <taxon>Saccharomycetaceae</taxon>
        <taxon>Nakaseomyces</taxon>
    </lineage>
</organism>
<comment type="function">
    <text evidence="1">Probable metalloprotease involved in proper assembly of pre-ribosomal particles during the biogenesis of the 60S ribosomal subunit. Accompanies the pre-60S particles to the cytoplasm (By similarity).</text>
</comment>
<comment type="subunit">
    <text evidence="1">Component of the nucleoplasmic and cytoplasmic pre-60S ribosomal particles.</text>
</comment>
<comment type="subcellular location">
    <subcellularLocation>
        <location evidence="1">Cytoplasm</location>
    </subcellularLocation>
    <subcellularLocation>
        <location evidence="1">Nucleus</location>
    </subcellularLocation>
</comment>
<comment type="similarity">
    <text evidence="2">Belongs to the peptidase M24 family.</text>
</comment>
<sequence length="588" mass="64730">MDLAVSNEDSQILLKDKNVLQETVLDKYRTSGQITQTALKFVTDLINDVYHYKKVQTPLSISELCLMADSFIVNRLEQYYKHKVNERGIALPTMIDVDAVASGWCPEVDDTENIKKWNNNSDETSPFASSITGYLRHGDVVKISLGCHIDGYTSQVTHTMVIYPTDETNTKPTGPLLGSKADAVAASHIASESVTALLACSLTPEKLPQSLRNANTNSVTGHQIRSVVDTIAKAYNCAVVPGSRVRRIRRFLAGQNEGIVAEKDYKGVVWTEAHQEANLLANTEVQDIVVANNQNKLVASSAIPSDDFSVDVGEVYLIDLKFCPLTDCQKKGLITLETVDSYTGKSHKKNQLIARSGAYVRDYAQSYTLKLKTARQLLTKIDKNGVYPLKLSHLSTDFPLTEFTAEESDAVKKDLRSFRLGMNEITNNFLCVETPIQVAKWVPWDHILNSTNKNGALSYDASAALTLPGHEIPLPKLGISGIKLKSLMNSTNEVMTLPVARECSTVILCGSDVSVSGKPELFRLTGGSKTAQPSWVHSARELNPADPVVQGIFNLAELSKDKRFGLTMRETQPMKKNINLASDTTMEM</sequence>
<gene>
    <name type="primary">ARX1</name>
    <name type="ordered locus">CAGL0L06314g</name>
</gene>
<dbReference type="EC" id="3.-.-.-"/>
<dbReference type="EMBL" id="CR380958">
    <property type="protein sequence ID" value="CAG62020.1"/>
    <property type="molecule type" value="Genomic_DNA"/>
</dbReference>
<dbReference type="RefSeq" id="XP_449050.1">
    <property type="nucleotide sequence ID" value="XM_449050.1"/>
</dbReference>
<dbReference type="SMR" id="Q6FL44"/>
<dbReference type="FunCoup" id="Q6FL44">
    <property type="interactions" value="435"/>
</dbReference>
<dbReference type="STRING" id="284593.Q6FL44"/>
<dbReference type="EnsemblFungi" id="CAGL0L06314g-T">
    <property type="protein sequence ID" value="CAGL0L06314g-T-p1"/>
    <property type="gene ID" value="CAGL0L06314g"/>
</dbReference>
<dbReference type="KEGG" id="cgr:2890758"/>
<dbReference type="CGD" id="CAL0135380">
    <property type="gene designation" value="CAGL0L06314g"/>
</dbReference>
<dbReference type="VEuPathDB" id="FungiDB:B1J91_L06314g"/>
<dbReference type="VEuPathDB" id="FungiDB:CAGL0L06314g"/>
<dbReference type="eggNOG" id="KOG2776">
    <property type="taxonomic scope" value="Eukaryota"/>
</dbReference>
<dbReference type="HOGENOM" id="CLU_477525_0_0_1"/>
<dbReference type="InParanoid" id="Q6FL44"/>
<dbReference type="OMA" id="KPSWVHS"/>
<dbReference type="Proteomes" id="UP000002428">
    <property type="component" value="Chromosome L"/>
</dbReference>
<dbReference type="GO" id="GO:0005737">
    <property type="term" value="C:cytoplasm"/>
    <property type="evidence" value="ECO:0007669"/>
    <property type="project" value="UniProtKB-SubCell"/>
</dbReference>
<dbReference type="GO" id="GO:0005730">
    <property type="term" value="C:nucleolus"/>
    <property type="evidence" value="ECO:0007669"/>
    <property type="project" value="EnsemblFungi"/>
</dbReference>
<dbReference type="GO" id="GO:0005654">
    <property type="term" value="C:nucleoplasm"/>
    <property type="evidence" value="ECO:0007669"/>
    <property type="project" value="EnsemblFungi"/>
</dbReference>
<dbReference type="GO" id="GO:0030687">
    <property type="term" value="C:preribosome, large subunit precursor"/>
    <property type="evidence" value="ECO:0007669"/>
    <property type="project" value="EnsemblFungi"/>
</dbReference>
<dbReference type="GO" id="GO:0046872">
    <property type="term" value="F:metal ion binding"/>
    <property type="evidence" value="ECO:0007669"/>
    <property type="project" value="UniProtKB-KW"/>
</dbReference>
<dbReference type="GO" id="GO:0008237">
    <property type="term" value="F:metallopeptidase activity"/>
    <property type="evidence" value="ECO:0007669"/>
    <property type="project" value="UniProtKB-KW"/>
</dbReference>
<dbReference type="GO" id="GO:0006508">
    <property type="term" value="P:proteolysis"/>
    <property type="evidence" value="ECO:0007669"/>
    <property type="project" value="UniProtKB-KW"/>
</dbReference>
<dbReference type="GO" id="GO:0000055">
    <property type="term" value="P:ribosomal large subunit export from nucleus"/>
    <property type="evidence" value="ECO:0007669"/>
    <property type="project" value="EnsemblFungi"/>
</dbReference>
<dbReference type="Gene3D" id="3.90.230.10">
    <property type="entry name" value="Creatinase/methionine aminopeptidase superfamily"/>
    <property type="match status" value="1"/>
</dbReference>
<dbReference type="Gene3D" id="1.10.10.10">
    <property type="entry name" value="Winged helix-like DNA-binding domain superfamily/Winged helix DNA-binding domain"/>
    <property type="match status" value="1"/>
</dbReference>
<dbReference type="InterPro" id="IPR036005">
    <property type="entry name" value="Creatinase/aminopeptidase-like"/>
</dbReference>
<dbReference type="InterPro" id="IPR047113">
    <property type="entry name" value="PA2G4/ARX1"/>
</dbReference>
<dbReference type="InterPro" id="IPR036388">
    <property type="entry name" value="WH-like_DNA-bd_sf"/>
</dbReference>
<dbReference type="PANTHER" id="PTHR10804:SF102">
    <property type="entry name" value="METALLOPROTEASE ARX1-RELATED"/>
    <property type="match status" value="1"/>
</dbReference>
<dbReference type="PANTHER" id="PTHR10804">
    <property type="entry name" value="PROTEASE FAMILY M24 METHIONYL AMINOPEPTIDASE, AMINOPEPTIDASE P"/>
    <property type="match status" value="1"/>
</dbReference>
<dbReference type="SUPFAM" id="SSF55920">
    <property type="entry name" value="Creatinase/aminopeptidase"/>
    <property type="match status" value="1"/>
</dbReference>
<reference key="1">
    <citation type="journal article" date="2004" name="Nature">
        <title>Genome evolution in yeasts.</title>
        <authorList>
            <person name="Dujon B."/>
            <person name="Sherman D."/>
            <person name="Fischer G."/>
            <person name="Durrens P."/>
            <person name="Casaregola S."/>
            <person name="Lafontaine I."/>
            <person name="de Montigny J."/>
            <person name="Marck C."/>
            <person name="Neuveglise C."/>
            <person name="Talla E."/>
            <person name="Goffard N."/>
            <person name="Frangeul L."/>
            <person name="Aigle M."/>
            <person name="Anthouard V."/>
            <person name="Babour A."/>
            <person name="Barbe V."/>
            <person name="Barnay S."/>
            <person name="Blanchin S."/>
            <person name="Beckerich J.-M."/>
            <person name="Beyne E."/>
            <person name="Bleykasten C."/>
            <person name="Boisrame A."/>
            <person name="Boyer J."/>
            <person name="Cattolico L."/>
            <person name="Confanioleri F."/>
            <person name="de Daruvar A."/>
            <person name="Despons L."/>
            <person name="Fabre E."/>
            <person name="Fairhead C."/>
            <person name="Ferry-Dumazet H."/>
            <person name="Groppi A."/>
            <person name="Hantraye F."/>
            <person name="Hennequin C."/>
            <person name="Jauniaux N."/>
            <person name="Joyet P."/>
            <person name="Kachouri R."/>
            <person name="Kerrest A."/>
            <person name="Koszul R."/>
            <person name="Lemaire M."/>
            <person name="Lesur I."/>
            <person name="Ma L."/>
            <person name="Muller H."/>
            <person name="Nicaud J.-M."/>
            <person name="Nikolski M."/>
            <person name="Oztas S."/>
            <person name="Ozier-Kalogeropoulos O."/>
            <person name="Pellenz S."/>
            <person name="Potier S."/>
            <person name="Richard G.-F."/>
            <person name="Straub M.-L."/>
            <person name="Suleau A."/>
            <person name="Swennen D."/>
            <person name="Tekaia F."/>
            <person name="Wesolowski-Louvel M."/>
            <person name="Westhof E."/>
            <person name="Wirth B."/>
            <person name="Zeniou-Meyer M."/>
            <person name="Zivanovic Y."/>
            <person name="Bolotin-Fukuhara M."/>
            <person name="Thierry A."/>
            <person name="Bouchier C."/>
            <person name="Caudron B."/>
            <person name="Scarpelli C."/>
            <person name="Gaillardin C."/>
            <person name="Weissenbach J."/>
            <person name="Wincker P."/>
            <person name="Souciet J.-L."/>
        </authorList>
    </citation>
    <scope>NUCLEOTIDE SEQUENCE [LARGE SCALE GENOMIC DNA]</scope>
    <source>
        <strain>ATCC 2001 / BCRC 20586 / JCM 3761 / NBRC 0622 / NRRL Y-65 / CBS 138</strain>
    </source>
</reference>
<keyword id="KW-0963">Cytoplasm</keyword>
<keyword id="KW-0378">Hydrolase</keyword>
<keyword id="KW-0479">Metal-binding</keyword>
<keyword id="KW-0482">Metalloprotease</keyword>
<keyword id="KW-0539">Nucleus</keyword>
<keyword id="KW-0645">Protease</keyword>
<keyword id="KW-1185">Reference proteome</keyword>
<name>ARX1_CANGA</name>
<accession>Q6FL44</accession>
<feature type="chain" id="PRO_0000148994" description="Probable metalloprotease ARX1">
    <location>
        <begin position="1"/>
        <end position="588"/>
    </location>
</feature>